<name>ILVC_KORVE</name>
<accession>Q1ILZ3</accession>
<dbReference type="EC" id="1.1.1.86" evidence="1"/>
<dbReference type="EMBL" id="CP000360">
    <property type="protein sequence ID" value="ABF42107.1"/>
    <property type="molecule type" value="Genomic_DNA"/>
</dbReference>
<dbReference type="RefSeq" id="WP_011523906.1">
    <property type="nucleotide sequence ID" value="NC_008009.1"/>
</dbReference>
<dbReference type="SMR" id="Q1ILZ3"/>
<dbReference type="STRING" id="204669.Acid345_3106"/>
<dbReference type="EnsemblBacteria" id="ABF42107">
    <property type="protein sequence ID" value="ABF42107"/>
    <property type="gene ID" value="Acid345_3106"/>
</dbReference>
<dbReference type="KEGG" id="aba:Acid345_3106"/>
<dbReference type="eggNOG" id="COG0059">
    <property type="taxonomic scope" value="Bacteria"/>
</dbReference>
<dbReference type="HOGENOM" id="CLU_033821_0_1_0"/>
<dbReference type="OrthoDB" id="9804088at2"/>
<dbReference type="UniPathway" id="UPA00047">
    <property type="reaction ID" value="UER00056"/>
</dbReference>
<dbReference type="UniPathway" id="UPA00049">
    <property type="reaction ID" value="UER00060"/>
</dbReference>
<dbReference type="Proteomes" id="UP000002432">
    <property type="component" value="Chromosome"/>
</dbReference>
<dbReference type="GO" id="GO:0005829">
    <property type="term" value="C:cytosol"/>
    <property type="evidence" value="ECO:0007669"/>
    <property type="project" value="TreeGrafter"/>
</dbReference>
<dbReference type="GO" id="GO:0004455">
    <property type="term" value="F:ketol-acid reductoisomerase activity"/>
    <property type="evidence" value="ECO:0007669"/>
    <property type="project" value="UniProtKB-UniRule"/>
</dbReference>
<dbReference type="GO" id="GO:0000287">
    <property type="term" value="F:magnesium ion binding"/>
    <property type="evidence" value="ECO:0007669"/>
    <property type="project" value="UniProtKB-UniRule"/>
</dbReference>
<dbReference type="GO" id="GO:0050661">
    <property type="term" value="F:NADP binding"/>
    <property type="evidence" value="ECO:0007669"/>
    <property type="project" value="InterPro"/>
</dbReference>
<dbReference type="GO" id="GO:0009097">
    <property type="term" value="P:isoleucine biosynthetic process"/>
    <property type="evidence" value="ECO:0007669"/>
    <property type="project" value="UniProtKB-UniRule"/>
</dbReference>
<dbReference type="GO" id="GO:0009099">
    <property type="term" value="P:L-valine biosynthetic process"/>
    <property type="evidence" value="ECO:0007669"/>
    <property type="project" value="UniProtKB-UniRule"/>
</dbReference>
<dbReference type="FunFam" id="3.40.50.720:FF:000023">
    <property type="entry name" value="Ketol-acid reductoisomerase (NADP(+))"/>
    <property type="match status" value="1"/>
</dbReference>
<dbReference type="Gene3D" id="6.10.240.10">
    <property type="match status" value="1"/>
</dbReference>
<dbReference type="Gene3D" id="3.40.50.720">
    <property type="entry name" value="NAD(P)-binding Rossmann-like Domain"/>
    <property type="match status" value="1"/>
</dbReference>
<dbReference type="HAMAP" id="MF_00435">
    <property type="entry name" value="IlvC"/>
    <property type="match status" value="1"/>
</dbReference>
<dbReference type="InterPro" id="IPR008927">
    <property type="entry name" value="6-PGluconate_DH-like_C_sf"/>
</dbReference>
<dbReference type="InterPro" id="IPR013023">
    <property type="entry name" value="KARI"/>
</dbReference>
<dbReference type="InterPro" id="IPR000506">
    <property type="entry name" value="KARI_C"/>
</dbReference>
<dbReference type="InterPro" id="IPR013116">
    <property type="entry name" value="KARI_N"/>
</dbReference>
<dbReference type="InterPro" id="IPR014359">
    <property type="entry name" value="KARI_prok"/>
</dbReference>
<dbReference type="InterPro" id="IPR036291">
    <property type="entry name" value="NAD(P)-bd_dom_sf"/>
</dbReference>
<dbReference type="NCBIfam" id="TIGR00465">
    <property type="entry name" value="ilvC"/>
    <property type="match status" value="1"/>
</dbReference>
<dbReference type="NCBIfam" id="NF004017">
    <property type="entry name" value="PRK05479.1"/>
    <property type="match status" value="1"/>
</dbReference>
<dbReference type="NCBIfam" id="NF009940">
    <property type="entry name" value="PRK13403.1"/>
    <property type="match status" value="1"/>
</dbReference>
<dbReference type="PANTHER" id="PTHR21371">
    <property type="entry name" value="KETOL-ACID REDUCTOISOMERASE, MITOCHONDRIAL"/>
    <property type="match status" value="1"/>
</dbReference>
<dbReference type="PANTHER" id="PTHR21371:SF1">
    <property type="entry name" value="KETOL-ACID REDUCTOISOMERASE, MITOCHONDRIAL"/>
    <property type="match status" value="1"/>
</dbReference>
<dbReference type="Pfam" id="PF01450">
    <property type="entry name" value="KARI_C"/>
    <property type="match status" value="1"/>
</dbReference>
<dbReference type="Pfam" id="PF07991">
    <property type="entry name" value="KARI_N"/>
    <property type="match status" value="1"/>
</dbReference>
<dbReference type="PIRSF" id="PIRSF000116">
    <property type="entry name" value="IlvC_gammaproteo"/>
    <property type="match status" value="1"/>
</dbReference>
<dbReference type="SUPFAM" id="SSF48179">
    <property type="entry name" value="6-phosphogluconate dehydrogenase C-terminal domain-like"/>
    <property type="match status" value="1"/>
</dbReference>
<dbReference type="SUPFAM" id="SSF51735">
    <property type="entry name" value="NAD(P)-binding Rossmann-fold domains"/>
    <property type="match status" value="1"/>
</dbReference>
<dbReference type="PROSITE" id="PS51851">
    <property type="entry name" value="KARI_C"/>
    <property type="match status" value="1"/>
</dbReference>
<dbReference type="PROSITE" id="PS51850">
    <property type="entry name" value="KARI_N"/>
    <property type="match status" value="1"/>
</dbReference>
<organism>
    <name type="scientific">Koribacter versatilis (strain Ellin345)</name>
    <dbReference type="NCBI Taxonomy" id="204669"/>
    <lineage>
        <taxon>Bacteria</taxon>
        <taxon>Pseudomonadati</taxon>
        <taxon>Acidobacteriota</taxon>
        <taxon>Terriglobia</taxon>
        <taxon>Terriglobales</taxon>
        <taxon>Candidatus Korobacteraceae</taxon>
        <taxon>Candidatus Korobacter</taxon>
    </lineage>
</organism>
<gene>
    <name evidence="1" type="primary">ilvC</name>
    <name type="ordered locus">Acid345_3106</name>
</gene>
<evidence type="ECO:0000255" key="1">
    <source>
        <dbReference type="HAMAP-Rule" id="MF_00435"/>
    </source>
</evidence>
<evidence type="ECO:0000255" key="2">
    <source>
        <dbReference type="PROSITE-ProRule" id="PRU01197"/>
    </source>
</evidence>
<evidence type="ECO:0000255" key="3">
    <source>
        <dbReference type="PROSITE-ProRule" id="PRU01198"/>
    </source>
</evidence>
<sequence length="345" mass="37685">MAKVYHDSSADLSIIRGKKVGIVGYGSQGHAHALNLVDSGVQVRVGLRPSSSSKAKAEKSGLQVGSVSDVAQWADVIMILAPDTEQAAIYEKDIAPHLKPGKTLMFAHGFNIRYGTITPPEGIDVSMVAPKAPGHRVREVFTEGGGTPALFAIHQDASGKAREIALSYAAAIGTTRAGVLETTFKEETETDLFGEQAVLCGGAAALVKAGFETLVEAGYQPELAYFECLHELKLIVDLMYRGGLNYMRYSVSDTAEYGDYIAGPRIITDETRKNMKQLLTDIQDGTFAKNWINENKTGRPWFEKKRTDEQEQQLEDVGAQLRDMMTFLNPVKIKQKSEQKEAVAQ</sequence>
<proteinExistence type="inferred from homology"/>
<reference key="1">
    <citation type="journal article" date="2009" name="Appl. Environ. Microbiol.">
        <title>Three genomes from the phylum Acidobacteria provide insight into the lifestyles of these microorganisms in soils.</title>
        <authorList>
            <person name="Ward N.L."/>
            <person name="Challacombe J.F."/>
            <person name="Janssen P.H."/>
            <person name="Henrissat B."/>
            <person name="Coutinho P.M."/>
            <person name="Wu M."/>
            <person name="Xie G."/>
            <person name="Haft D.H."/>
            <person name="Sait M."/>
            <person name="Badger J."/>
            <person name="Barabote R.D."/>
            <person name="Bradley B."/>
            <person name="Brettin T.S."/>
            <person name="Brinkac L.M."/>
            <person name="Bruce D."/>
            <person name="Creasy T."/>
            <person name="Daugherty S.C."/>
            <person name="Davidsen T.M."/>
            <person name="DeBoy R.T."/>
            <person name="Detter J.C."/>
            <person name="Dodson R.J."/>
            <person name="Durkin A.S."/>
            <person name="Ganapathy A."/>
            <person name="Gwinn-Giglio M."/>
            <person name="Han C.S."/>
            <person name="Khouri H."/>
            <person name="Kiss H."/>
            <person name="Kothari S.P."/>
            <person name="Madupu R."/>
            <person name="Nelson K.E."/>
            <person name="Nelson W.C."/>
            <person name="Paulsen I."/>
            <person name="Penn K."/>
            <person name="Ren Q."/>
            <person name="Rosovitz M.J."/>
            <person name="Selengut J.D."/>
            <person name="Shrivastava S."/>
            <person name="Sullivan S.A."/>
            <person name="Tapia R."/>
            <person name="Thompson L.S."/>
            <person name="Watkins K.L."/>
            <person name="Yang Q."/>
            <person name="Yu C."/>
            <person name="Zafar N."/>
            <person name="Zhou L."/>
            <person name="Kuske C.R."/>
        </authorList>
    </citation>
    <scope>NUCLEOTIDE SEQUENCE [LARGE SCALE GENOMIC DNA]</scope>
    <source>
        <strain>Ellin345</strain>
    </source>
</reference>
<protein>
    <recommendedName>
        <fullName evidence="1">Ketol-acid reductoisomerase (NADP(+))</fullName>
        <shortName evidence="1">KARI</shortName>
        <ecNumber evidence="1">1.1.1.86</ecNumber>
    </recommendedName>
    <alternativeName>
        <fullName evidence="1">Acetohydroxy-acid isomeroreductase</fullName>
        <shortName evidence="1">AHIR</shortName>
    </alternativeName>
    <alternativeName>
        <fullName evidence="1">Alpha-keto-beta-hydroxylacyl reductoisomerase</fullName>
    </alternativeName>
    <alternativeName>
        <fullName evidence="1">Ketol-acid reductoisomerase type 1</fullName>
    </alternativeName>
    <alternativeName>
        <fullName evidence="1">Ketol-acid reductoisomerase type I</fullName>
    </alternativeName>
</protein>
<feature type="chain" id="PRO_0000252747" description="Ketol-acid reductoisomerase (NADP(+))">
    <location>
        <begin position="1"/>
        <end position="345"/>
    </location>
</feature>
<feature type="domain" description="KARI N-terminal Rossmann" evidence="2">
    <location>
        <begin position="2"/>
        <end position="182"/>
    </location>
</feature>
<feature type="domain" description="KARI C-terminal knotted" evidence="3">
    <location>
        <begin position="183"/>
        <end position="328"/>
    </location>
</feature>
<feature type="active site" evidence="1">
    <location>
        <position position="108"/>
    </location>
</feature>
<feature type="binding site" evidence="1">
    <location>
        <begin position="25"/>
        <end position="28"/>
    </location>
    <ligand>
        <name>NADP(+)</name>
        <dbReference type="ChEBI" id="CHEBI:58349"/>
    </ligand>
</feature>
<feature type="binding site" evidence="1">
    <location>
        <position position="48"/>
    </location>
    <ligand>
        <name>NADP(+)</name>
        <dbReference type="ChEBI" id="CHEBI:58349"/>
    </ligand>
</feature>
<feature type="binding site" evidence="1">
    <location>
        <position position="51"/>
    </location>
    <ligand>
        <name>NADP(+)</name>
        <dbReference type="ChEBI" id="CHEBI:58349"/>
    </ligand>
</feature>
<feature type="binding site" evidence="1">
    <location>
        <position position="53"/>
    </location>
    <ligand>
        <name>NADP(+)</name>
        <dbReference type="ChEBI" id="CHEBI:58349"/>
    </ligand>
</feature>
<feature type="binding site" evidence="1">
    <location>
        <begin position="83"/>
        <end position="86"/>
    </location>
    <ligand>
        <name>NADP(+)</name>
        <dbReference type="ChEBI" id="CHEBI:58349"/>
    </ligand>
</feature>
<feature type="binding site" evidence="1">
    <location>
        <position position="134"/>
    </location>
    <ligand>
        <name>NADP(+)</name>
        <dbReference type="ChEBI" id="CHEBI:58349"/>
    </ligand>
</feature>
<feature type="binding site" evidence="1">
    <location>
        <position position="191"/>
    </location>
    <ligand>
        <name>Mg(2+)</name>
        <dbReference type="ChEBI" id="CHEBI:18420"/>
        <label>1</label>
    </ligand>
</feature>
<feature type="binding site" evidence="1">
    <location>
        <position position="191"/>
    </location>
    <ligand>
        <name>Mg(2+)</name>
        <dbReference type="ChEBI" id="CHEBI:18420"/>
        <label>2</label>
    </ligand>
</feature>
<feature type="binding site" evidence="1">
    <location>
        <position position="195"/>
    </location>
    <ligand>
        <name>Mg(2+)</name>
        <dbReference type="ChEBI" id="CHEBI:18420"/>
        <label>1</label>
    </ligand>
</feature>
<feature type="binding site" evidence="1">
    <location>
        <position position="227"/>
    </location>
    <ligand>
        <name>Mg(2+)</name>
        <dbReference type="ChEBI" id="CHEBI:18420"/>
        <label>2</label>
    </ligand>
</feature>
<feature type="binding site" evidence="1">
    <location>
        <position position="231"/>
    </location>
    <ligand>
        <name>Mg(2+)</name>
        <dbReference type="ChEBI" id="CHEBI:18420"/>
        <label>2</label>
    </ligand>
</feature>
<feature type="binding site" evidence="1">
    <location>
        <position position="252"/>
    </location>
    <ligand>
        <name>substrate</name>
    </ligand>
</feature>
<keyword id="KW-0028">Amino-acid biosynthesis</keyword>
<keyword id="KW-0100">Branched-chain amino acid biosynthesis</keyword>
<keyword id="KW-0460">Magnesium</keyword>
<keyword id="KW-0479">Metal-binding</keyword>
<keyword id="KW-0521">NADP</keyword>
<keyword id="KW-0560">Oxidoreductase</keyword>
<keyword id="KW-1185">Reference proteome</keyword>
<comment type="function">
    <text evidence="1">Involved in the biosynthesis of branched-chain amino acids (BCAA). Catalyzes an alkyl-migration followed by a ketol-acid reduction of (S)-2-acetolactate (S2AL) to yield (R)-2,3-dihydroxy-isovalerate. In the isomerase reaction, S2AL is rearranged via a Mg-dependent methyl migration to produce 3-hydroxy-3-methyl-2-ketobutyrate (HMKB). In the reductase reaction, this 2-ketoacid undergoes a metal-dependent reduction by NADPH to yield (R)-2,3-dihydroxy-isovalerate.</text>
</comment>
<comment type="catalytic activity">
    <reaction evidence="1">
        <text>(2R)-2,3-dihydroxy-3-methylbutanoate + NADP(+) = (2S)-2-acetolactate + NADPH + H(+)</text>
        <dbReference type="Rhea" id="RHEA:22068"/>
        <dbReference type="ChEBI" id="CHEBI:15378"/>
        <dbReference type="ChEBI" id="CHEBI:49072"/>
        <dbReference type="ChEBI" id="CHEBI:57783"/>
        <dbReference type="ChEBI" id="CHEBI:58349"/>
        <dbReference type="ChEBI" id="CHEBI:58476"/>
        <dbReference type="EC" id="1.1.1.86"/>
    </reaction>
</comment>
<comment type="catalytic activity">
    <reaction evidence="1">
        <text>(2R,3R)-2,3-dihydroxy-3-methylpentanoate + NADP(+) = (S)-2-ethyl-2-hydroxy-3-oxobutanoate + NADPH + H(+)</text>
        <dbReference type="Rhea" id="RHEA:13493"/>
        <dbReference type="ChEBI" id="CHEBI:15378"/>
        <dbReference type="ChEBI" id="CHEBI:49256"/>
        <dbReference type="ChEBI" id="CHEBI:49258"/>
        <dbReference type="ChEBI" id="CHEBI:57783"/>
        <dbReference type="ChEBI" id="CHEBI:58349"/>
        <dbReference type="EC" id="1.1.1.86"/>
    </reaction>
</comment>
<comment type="cofactor">
    <cofactor evidence="1">
        <name>Mg(2+)</name>
        <dbReference type="ChEBI" id="CHEBI:18420"/>
    </cofactor>
    <text evidence="1">Binds 2 magnesium ions per subunit.</text>
</comment>
<comment type="pathway">
    <text evidence="1">Amino-acid biosynthesis; L-isoleucine biosynthesis; L-isoleucine from 2-oxobutanoate: step 2/4.</text>
</comment>
<comment type="pathway">
    <text evidence="1">Amino-acid biosynthesis; L-valine biosynthesis; L-valine from pyruvate: step 2/4.</text>
</comment>
<comment type="similarity">
    <text evidence="1">Belongs to the ketol-acid reductoisomerase family.</text>
</comment>